<proteinExistence type="inferred from homology"/>
<name>SYFA_BRUAB</name>
<evidence type="ECO:0000255" key="1">
    <source>
        <dbReference type="HAMAP-Rule" id="MF_00281"/>
    </source>
</evidence>
<organism>
    <name type="scientific">Brucella abortus biovar 1 (strain 9-941)</name>
    <dbReference type="NCBI Taxonomy" id="262698"/>
    <lineage>
        <taxon>Bacteria</taxon>
        <taxon>Pseudomonadati</taxon>
        <taxon>Pseudomonadota</taxon>
        <taxon>Alphaproteobacteria</taxon>
        <taxon>Hyphomicrobiales</taxon>
        <taxon>Brucellaceae</taxon>
        <taxon>Brucella/Ochrobactrum group</taxon>
        <taxon>Brucella</taxon>
    </lineage>
</organism>
<keyword id="KW-0030">Aminoacyl-tRNA synthetase</keyword>
<keyword id="KW-0067">ATP-binding</keyword>
<keyword id="KW-0963">Cytoplasm</keyword>
<keyword id="KW-0436">Ligase</keyword>
<keyword id="KW-0460">Magnesium</keyword>
<keyword id="KW-0479">Metal-binding</keyword>
<keyword id="KW-0547">Nucleotide-binding</keyword>
<keyword id="KW-0648">Protein biosynthesis</keyword>
<sequence>MSDLEQLERQILEDIAAAVDEQGIEAVRVAALGKKGTVSEKLKTLGGMSPEERQMQGPAINGLKNRVTEALSERRTELRKAAVAARLEREKVDVTLPVRESAASRGRIHPISQVIDEITAIFADMGFSIAEGPDIETDYYNFTALNFPEGHPAREMHDTFFFNPDEKGERKLLRTHTSPVQVHTMEKFAAMRDKEGRDEPIRIVIPGKTYRMDSDATHSPMFHQVEGLVVDKSANVANMKWVLEEFCKAFFEVPSVKMRMRPSFFPFTEPSVEVDIQCDRSGPHVKFGEGNDWLEILGCGMVHPNVLRMSGYDPEVYQGFAWGMGIDRIAMLKYGMPDLRAFFDADVRWIEHYGFRPLDIPTLFGGLSA</sequence>
<reference key="1">
    <citation type="journal article" date="2005" name="J. Bacteriol.">
        <title>Completion of the genome sequence of Brucella abortus and comparison to the highly similar genomes of Brucella melitensis and Brucella suis.</title>
        <authorList>
            <person name="Halling S.M."/>
            <person name="Peterson-Burch B.D."/>
            <person name="Bricker B.J."/>
            <person name="Zuerner R.L."/>
            <person name="Qing Z."/>
            <person name="Li L.-L."/>
            <person name="Kapur V."/>
            <person name="Alt D.P."/>
            <person name="Olsen S.C."/>
        </authorList>
    </citation>
    <scope>NUCLEOTIDE SEQUENCE [LARGE SCALE GENOMIC DNA]</scope>
    <source>
        <strain>9-941</strain>
    </source>
</reference>
<dbReference type="EC" id="6.1.1.20" evidence="1"/>
<dbReference type="EMBL" id="AE017223">
    <property type="protein sequence ID" value="AAX75394.1"/>
    <property type="molecule type" value="Genomic_DNA"/>
</dbReference>
<dbReference type="RefSeq" id="WP_002967041.1">
    <property type="nucleotide sequence ID" value="NC_006932.1"/>
</dbReference>
<dbReference type="SMR" id="Q57AE0"/>
<dbReference type="EnsemblBacteria" id="AAX75394">
    <property type="protein sequence ID" value="AAX75394"/>
    <property type="gene ID" value="BruAb1_2097"/>
</dbReference>
<dbReference type="GeneID" id="97534620"/>
<dbReference type="KEGG" id="bmb:BruAb1_2097"/>
<dbReference type="HOGENOM" id="CLU_025086_0_1_5"/>
<dbReference type="Proteomes" id="UP000000540">
    <property type="component" value="Chromosome I"/>
</dbReference>
<dbReference type="GO" id="GO:0005737">
    <property type="term" value="C:cytoplasm"/>
    <property type="evidence" value="ECO:0007669"/>
    <property type="project" value="UniProtKB-SubCell"/>
</dbReference>
<dbReference type="GO" id="GO:0005524">
    <property type="term" value="F:ATP binding"/>
    <property type="evidence" value="ECO:0007669"/>
    <property type="project" value="UniProtKB-UniRule"/>
</dbReference>
<dbReference type="GO" id="GO:0000287">
    <property type="term" value="F:magnesium ion binding"/>
    <property type="evidence" value="ECO:0007669"/>
    <property type="project" value="UniProtKB-UniRule"/>
</dbReference>
<dbReference type="GO" id="GO:0004826">
    <property type="term" value="F:phenylalanine-tRNA ligase activity"/>
    <property type="evidence" value="ECO:0007669"/>
    <property type="project" value="UniProtKB-UniRule"/>
</dbReference>
<dbReference type="GO" id="GO:0000049">
    <property type="term" value="F:tRNA binding"/>
    <property type="evidence" value="ECO:0007669"/>
    <property type="project" value="InterPro"/>
</dbReference>
<dbReference type="GO" id="GO:0006432">
    <property type="term" value="P:phenylalanyl-tRNA aminoacylation"/>
    <property type="evidence" value="ECO:0007669"/>
    <property type="project" value="UniProtKB-UniRule"/>
</dbReference>
<dbReference type="CDD" id="cd00496">
    <property type="entry name" value="PheRS_alpha_core"/>
    <property type="match status" value="1"/>
</dbReference>
<dbReference type="FunFam" id="3.30.930.10:FF:000003">
    <property type="entry name" value="Phenylalanine--tRNA ligase alpha subunit"/>
    <property type="match status" value="1"/>
</dbReference>
<dbReference type="Gene3D" id="3.30.930.10">
    <property type="entry name" value="Bira Bifunctional Protein, Domain 2"/>
    <property type="match status" value="1"/>
</dbReference>
<dbReference type="HAMAP" id="MF_00281">
    <property type="entry name" value="Phe_tRNA_synth_alpha1"/>
    <property type="match status" value="1"/>
</dbReference>
<dbReference type="InterPro" id="IPR006195">
    <property type="entry name" value="aa-tRNA-synth_II"/>
</dbReference>
<dbReference type="InterPro" id="IPR045864">
    <property type="entry name" value="aa-tRNA-synth_II/BPL/LPL"/>
</dbReference>
<dbReference type="InterPro" id="IPR004529">
    <property type="entry name" value="Phe-tRNA-synth_IIc_asu"/>
</dbReference>
<dbReference type="InterPro" id="IPR004188">
    <property type="entry name" value="Phe-tRNA_ligase_II_N"/>
</dbReference>
<dbReference type="InterPro" id="IPR022911">
    <property type="entry name" value="Phe_tRNA_ligase_alpha1_bac"/>
</dbReference>
<dbReference type="InterPro" id="IPR002319">
    <property type="entry name" value="Phenylalanyl-tRNA_Synthase"/>
</dbReference>
<dbReference type="InterPro" id="IPR010978">
    <property type="entry name" value="tRNA-bd_arm"/>
</dbReference>
<dbReference type="NCBIfam" id="TIGR00468">
    <property type="entry name" value="pheS"/>
    <property type="match status" value="1"/>
</dbReference>
<dbReference type="PANTHER" id="PTHR11538:SF41">
    <property type="entry name" value="PHENYLALANINE--TRNA LIGASE, MITOCHONDRIAL"/>
    <property type="match status" value="1"/>
</dbReference>
<dbReference type="PANTHER" id="PTHR11538">
    <property type="entry name" value="PHENYLALANYL-TRNA SYNTHETASE"/>
    <property type="match status" value="1"/>
</dbReference>
<dbReference type="Pfam" id="PF02912">
    <property type="entry name" value="Phe_tRNA-synt_N"/>
    <property type="match status" value="1"/>
</dbReference>
<dbReference type="Pfam" id="PF01409">
    <property type="entry name" value="tRNA-synt_2d"/>
    <property type="match status" value="1"/>
</dbReference>
<dbReference type="SUPFAM" id="SSF55681">
    <property type="entry name" value="Class II aaRS and biotin synthetases"/>
    <property type="match status" value="1"/>
</dbReference>
<dbReference type="SUPFAM" id="SSF46589">
    <property type="entry name" value="tRNA-binding arm"/>
    <property type="match status" value="1"/>
</dbReference>
<dbReference type="PROSITE" id="PS50862">
    <property type="entry name" value="AA_TRNA_LIGASE_II"/>
    <property type="match status" value="1"/>
</dbReference>
<comment type="catalytic activity">
    <reaction evidence="1">
        <text>tRNA(Phe) + L-phenylalanine + ATP = L-phenylalanyl-tRNA(Phe) + AMP + diphosphate + H(+)</text>
        <dbReference type="Rhea" id="RHEA:19413"/>
        <dbReference type="Rhea" id="RHEA-COMP:9668"/>
        <dbReference type="Rhea" id="RHEA-COMP:9699"/>
        <dbReference type="ChEBI" id="CHEBI:15378"/>
        <dbReference type="ChEBI" id="CHEBI:30616"/>
        <dbReference type="ChEBI" id="CHEBI:33019"/>
        <dbReference type="ChEBI" id="CHEBI:58095"/>
        <dbReference type="ChEBI" id="CHEBI:78442"/>
        <dbReference type="ChEBI" id="CHEBI:78531"/>
        <dbReference type="ChEBI" id="CHEBI:456215"/>
        <dbReference type="EC" id="6.1.1.20"/>
    </reaction>
</comment>
<comment type="cofactor">
    <cofactor evidence="1">
        <name>Mg(2+)</name>
        <dbReference type="ChEBI" id="CHEBI:18420"/>
    </cofactor>
    <text evidence="1">Binds 2 magnesium ions per tetramer.</text>
</comment>
<comment type="subunit">
    <text evidence="1">Tetramer of two alpha and two beta subunits.</text>
</comment>
<comment type="subcellular location">
    <subcellularLocation>
        <location evidence="1">Cytoplasm</location>
    </subcellularLocation>
</comment>
<comment type="similarity">
    <text evidence="1">Belongs to the class-II aminoacyl-tRNA synthetase family. Phe-tRNA synthetase alpha subunit type 1 subfamily.</text>
</comment>
<gene>
    <name evidence="1" type="primary">pheS</name>
    <name type="ordered locus">BruAb1_2097</name>
</gene>
<protein>
    <recommendedName>
        <fullName evidence="1">Phenylalanine--tRNA ligase alpha subunit</fullName>
        <ecNumber evidence="1">6.1.1.20</ecNumber>
    </recommendedName>
    <alternativeName>
        <fullName evidence="1">Phenylalanyl-tRNA synthetase alpha subunit</fullName>
        <shortName evidence="1">PheRS</shortName>
    </alternativeName>
</protein>
<feature type="chain" id="PRO_0000231967" description="Phenylalanine--tRNA ligase alpha subunit">
    <location>
        <begin position="1"/>
        <end position="369"/>
    </location>
</feature>
<feature type="binding site" evidence="1">
    <location>
        <position position="269"/>
    </location>
    <ligand>
        <name>Mg(2+)</name>
        <dbReference type="ChEBI" id="CHEBI:18420"/>
        <note>shared with beta subunit</note>
    </ligand>
</feature>
<accession>Q57AE0</accession>